<name>DGOD_CROS8</name>
<feature type="chain" id="PRO_0000352619" description="D-galactonate dehydratase">
    <location>
        <begin position="1"/>
        <end position="382"/>
    </location>
</feature>
<feature type="active site" description="Proton donor" evidence="1">
    <location>
        <position position="185"/>
    </location>
</feature>
<feature type="active site" description="Proton acceptor" evidence="1">
    <location>
        <position position="285"/>
    </location>
</feature>
<feature type="binding site" evidence="2">
    <location>
        <position position="183"/>
    </location>
    <ligand>
        <name>Mg(2+)</name>
        <dbReference type="ChEBI" id="CHEBI:18420"/>
    </ligand>
</feature>
<feature type="binding site" evidence="2">
    <location>
        <position position="209"/>
    </location>
    <ligand>
        <name>Mg(2+)</name>
        <dbReference type="ChEBI" id="CHEBI:18420"/>
    </ligand>
</feature>
<feature type="binding site" evidence="2">
    <location>
        <position position="235"/>
    </location>
    <ligand>
        <name>Mg(2+)</name>
        <dbReference type="ChEBI" id="CHEBI:18420"/>
    </ligand>
</feature>
<feature type="site" description="Increases basicity of active site His" evidence="2">
    <location>
        <position position="258"/>
    </location>
</feature>
<feature type="site" description="Transition state stabilizer" evidence="2">
    <location>
        <position position="310"/>
    </location>
</feature>
<protein>
    <recommendedName>
        <fullName evidence="2">D-galactonate dehydratase</fullName>
        <shortName evidence="2">GalD</shortName>
        <ecNumber evidence="2">4.2.1.6</ecNumber>
    </recommendedName>
</protein>
<keyword id="KW-0456">Lyase</keyword>
<keyword id="KW-0460">Magnesium</keyword>
<keyword id="KW-0479">Metal-binding</keyword>
<keyword id="KW-1185">Reference proteome</keyword>
<reference key="1">
    <citation type="journal article" date="2010" name="PLoS ONE">
        <title>Genome sequence of Cronobacter sakazakii BAA-894 and comparative genomic hybridization analysis with other Cronobacter species.</title>
        <authorList>
            <person name="Kucerova E."/>
            <person name="Clifton S.W."/>
            <person name="Xia X.Q."/>
            <person name="Long F."/>
            <person name="Porwollik S."/>
            <person name="Fulton L."/>
            <person name="Fronick C."/>
            <person name="Minx P."/>
            <person name="Kyung K."/>
            <person name="Warren W."/>
            <person name="Fulton R."/>
            <person name="Feng D."/>
            <person name="Wollam A."/>
            <person name="Shah N."/>
            <person name="Bhonagiri V."/>
            <person name="Nash W.E."/>
            <person name="Hallsworth-Pepin K."/>
            <person name="Wilson R.K."/>
            <person name="McClelland M."/>
            <person name="Forsythe S.J."/>
        </authorList>
    </citation>
    <scope>NUCLEOTIDE SEQUENCE [LARGE SCALE GENOMIC DNA]</scope>
    <source>
        <strain>ATCC BAA-894</strain>
    </source>
</reference>
<gene>
    <name evidence="2" type="primary">dgoD</name>
    <name type="ordered locus">ESA_03967</name>
</gene>
<evidence type="ECO:0000250" key="1"/>
<evidence type="ECO:0000255" key="2">
    <source>
        <dbReference type="HAMAP-Rule" id="MF_01289"/>
    </source>
</evidence>
<dbReference type="EC" id="4.2.1.6" evidence="2"/>
<dbReference type="EMBL" id="CP000783">
    <property type="protein sequence ID" value="ABU79153.1"/>
    <property type="molecule type" value="Genomic_DNA"/>
</dbReference>
<dbReference type="RefSeq" id="WP_012126176.1">
    <property type="nucleotide sequence ID" value="NC_009778.1"/>
</dbReference>
<dbReference type="SMR" id="A7MN07"/>
<dbReference type="KEGG" id="esa:ESA_03967"/>
<dbReference type="PATRIC" id="fig|290339.8.peg.3517"/>
<dbReference type="HOGENOM" id="CLU_030273_3_2_6"/>
<dbReference type="UniPathway" id="UPA00081">
    <property type="reaction ID" value="UER00518"/>
</dbReference>
<dbReference type="Proteomes" id="UP000000260">
    <property type="component" value="Chromosome"/>
</dbReference>
<dbReference type="GO" id="GO:0008869">
    <property type="term" value="F:galactonate dehydratase activity"/>
    <property type="evidence" value="ECO:0007669"/>
    <property type="project" value="UniProtKB-UniRule"/>
</dbReference>
<dbReference type="GO" id="GO:0000287">
    <property type="term" value="F:magnesium ion binding"/>
    <property type="evidence" value="ECO:0007669"/>
    <property type="project" value="UniProtKB-UniRule"/>
</dbReference>
<dbReference type="GO" id="GO:0009063">
    <property type="term" value="P:amino acid catabolic process"/>
    <property type="evidence" value="ECO:0007669"/>
    <property type="project" value="InterPro"/>
</dbReference>
<dbReference type="GO" id="GO:0034194">
    <property type="term" value="P:D-galactonate catabolic process"/>
    <property type="evidence" value="ECO:0007669"/>
    <property type="project" value="UniProtKB-UniRule"/>
</dbReference>
<dbReference type="CDD" id="cd03325">
    <property type="entry name" value="D-galactonate_dehydratase"/>
    <property type="match status" value="1"/>
</dbReference>
<dbReference type="FunFam" id="3.30.390.10:FF:000003">
    <property type="entry name" value="D-galactonate dehydratase"/>
    <property type="match status" value="1"/>
</dbReference>
<dbReference type="Gene3D" id="3.20.20.120">
    <property type="entry name" value="Enolase-like C-terminal domain"/>
    <property type="match status" value="1"/>
</dbReference>
<dbReference type="Gene3D" id="3.30.390.10">
    <property type="entry name" value="Enolase-like, N-terminal domain"/>
    <property type="match status" value="1"/>
</dbReference>
<dbReference type="HAMAP" id="MF_01289">
    <property type="entry name" value="Galacton_dehydrat"/>
    <property type="match status" value="1"/>
</dbReference>
<dbReference type="InterPro" id="IPR034593">
    <property type="entry name" value="DgoD-like"/>
</dbReference>
<dbReference type="InterPro" id="IPR036849">
    <property type="entry name" value="Enolase-like_C_sf"/>
</dbReference>
<dbReference type="InterPro" id="IPR029017">
    <property type="entry name" value="Enolase-like_N"/>
</dbReference>
<dbReference type="InterPro" id="IPR029065">
    <property type="entry name" value="Enolase_C-like"/>
</dbReference>
<dbReference type="InterPro" id="IPR023592">
    <property type="entry name" value="Galactonate_deHydtase"/>
</dbReference>
<dbReference type="InterPro" id="IPR018110">
    <property type="entry name" value="Mandel_Rmase/mucon_lact_enz_CS"/>
</dbReference>
<dbReference type="InterPro" id="IPR013342">
    <property type="entry name" value="Mandelate_racemase_C"/>
</dbReference>
<dbReference type="InterPro" id="IPR013341">
    <property type="entry name" value="Mandelate_racemase_N_dom"/>
</dbReference>
<dbReference type="NCBIfam" id="NF010624">
    <property type="entry name" value="PRK14017.1"/>
    <property type="match status" value="1"/>
</dbReference>
<dbReference type="PANTHER" id="PTHR48080:SF2">
    <property type="entry name" value="D-GALACTONATE DEHYDRATASE"/>
    <property type="match status" value="1"/>
</dbReference>
<dbReference type="PANTHER" id="PTHR48080">
    <property type="entry name" value="D-GALACTONATE DEHYDRATASE-RELATED"/>
    <property type="match status" value="1"/>
</dbReference>
<dbReference type="Pfam" id="PF13378">
    <property type="entry name" value="MR_MLE_C"/>
    <property type="match status" value="1"/>
</dbReference>
<dbReference type="Pfam" id="PF02746">
    <property type="entry name" value="MR_MLE_N"/>
    <property type="match status" value="1"/>
</dbReference>
<dbReference type="SFLD" id="SFLDF00003">
    <property type="entry name" value="D-galactonate_dehydratase"/>
    <property type="match status" value="1"/>
</dbReference>
<dbReference type="SFLD" id="SFLDG00179">
    <property type="entry name" value="mandelate_racemase"/>
    <property type="match status" value="1"/>
</dbReference>
<dbReference type="SMART" id="SM00922">
    <property type="entry name" value="MR_MLE"/>
    <property type="match status" value="1"/>
</dbReference>
<dbReference type="SUPFAM" id="SSF51604">
    <property type="entry name" value="Enolase C-terminal domain-like"/>
    <property type="match status" value="1"/>
</dbReference>
<dbReference type="SUPFAM" id="SSF54826">
    <property type="entry name" value="Enolase N-terminal domain-like"/>
    <property type="match status" value="1"/>
</dbReference>
<dbReference type="PROSITE" id="PS00908">
    <property type="entry name" value="MR_MLE_1"/>
    <property type="match status" value="1"/>
</dbReference>
<dbReference type="PROSITE" id="PS00909">
    <property type="entry name" value="MR_MLE_2"/>
    <property type="match status" value="1"/>
</dbReference>
<sequence length="382" mass="42429">MKITKLTTYRLPPRWMFLKIETDEGVVGWGEPVIEGRARTVEAAVHELGEYLIGQDPARINDLWQVMYRGGFYRGGPILMSAIAGIDQALWDIKGKVLNAPVWQLMGGLVRDKIKAYSWVGGDRPAEVIAGIKTLRQIGFDTFKLNGCEELGIIDDSRKVDAAVNTVAQIREEFGSDIEFGLDFHGRVSAPMAKILIKELEPYRPLFIEEPVLAEQAEYYPRLAAQTHIPIAAGERMFSRFEFKRVLEAGGLAILQPDLSHAGGITECAKIAAMAEAYDVGLAPHCPLGPIALAACLHVDFISRNAVFQEQSMGIHYNQGAELLDFVKNKDDFKMEGGYFQPLMKPGLGVEIDEEQVVARSQGCADWRNPLWRHADGSVAEW</sequence>
<accession>A7MN07</accession>
<comment type="function">
    <text evidence="2">Catalyzes the dehydration of D-galactonate to 2-keto-3-deoxy-D-galactonate.</text>
</comment>
<comment type="catalytic activity">
    <reaction evidence="2">
        <text>D-galactonate = 2-dehydro-3-deoxy-D-galactonate + H2O</text>
        <dbReference type="Rhea" id="RHEA:18649"/>
        <dbReference type="ChEBI" id="CHEBI:12931"/>
        <dbReference type="ChEBI" id="CHEBI:15377"/>
        <dbReference type="ChEBI" id="CHEBI:57989"/>
        <dbReference type="EC" id="4.2.1.6"/>
    </reaction>
</comment>
<comment type="cofactor">
    <cofactor evidence="2">
        <name>Mg(2+)</name>
        <dbReference type="ChEBI" id="CHEBI:18420"/>
    </cofactor>
    <text evidence="2">Binds 1 Mg(2+) ion per subunit.</text>
</comment>
<comment type="pathway">
    <text evidence="2">Carbohydrate acid metabolism; D-galactonate degradation; D-glyceraldehyde 3-phosphate and pyruvate from D-galactonate: step 1/3.</text>
</comment>
<comment type="miscellaneous">
    <text evidence="2">Reaction proceeds via an anti dehydration.</text>
</comment>
<comment type="similarity">
    <text evidence="2">Belongs to the mandelate racemase/muconate lactonizing enzyme family. GalD subfamily.</text>
</comment>
<proteinExistence type="inferred from homology"/>
<organism>
    <name type="scientific">Cronobacter sakazakii (strain ATCC BAA-894)</name>
    <name type="common">Enterobacter sakazakii</name>
    <dbReference type="NCBI Taxonomy" id="290339"/>
    <lineage>
        <taxon>Bacteria</taxon>
        <taxon>Pseudomonadati</taxon>
        <taxon>Pseudomonadota</taxon>
        <taxon>Gammaproteobacteria</taxon>
        <taxon>Enterobacterales</taxon>
        <taxon>Enterobacteriaceae</taxon>
        <taxon>Cronobacter</taxon>
    </lineage>
</organism>